<proteinExistence type="inferred from homology"/>
<sequence length="364" mass="40357">MDQSFVTERLEATCRTFNALERQLADPSVAADPEQLLTLAKERSRLEPLVLDYQRLQQLHAEHQQAQQLLKESKGDAELEALAQEELQQLSSEQEQLNQRLKVALLPSDPRDERSVMLEIRAGAGGDEACLWAGDLARMYERHAQTCGWQVNPVSASEAELGGFKELILAIRGDAVFSQLKYEAGVHRVQRVPATESQGRVHTSTATVAVMPEADPVDVQIDPKDLDISTARSGGAGGQNVNKVETAVDLLHKPTGIRVFCTQERSQLQNRERAMEILRAKLLAKEEEEAAAAESSARRAQVGSGDRSEKIRTYNYKDNRTTDHRLGKNFPLETVLNGQLSDLIEACTHADQQQKLEELAASES</sequence>
<protein>
    <recommendedName>
        <fullName evidence="1">Peptide chain release factor 1</fullName>
        <shortName evidence="1">RF-1</shortName>
    </recommendedName>
</protein>
<accession>A5GVY9</accession>
<organism>
    <name type="scientific">Synechococcus sp. (strain RCC307)</name>
    <dbReference type="NCBI Taxonomy" id="316278"/>
    <lineage>
        <taxon>Bacteria</taxon>
        <taxon>Bacillati</taxon>
        <taxon>Cyanobacteriota</taxon>
        <taxon>Cyanophyceae</taxon>
        <taxon>Synechococcales</taxon>
        <taxon>Synechococcaceae</taxon>
        <taxon>Synechococcus</taxon>
    </lineage>
</organism>
<feature type="chain" id="PRO_1000004963" description="Peptide chain release factor 1">
    <location>
        <begin position="1"/>
        <end position="364"/>
    </location>
</feature>
<feature type="region of interest" description="Disordered" evidence="2">
    <location>
        <begin position="292"/>
        <end position="326"/>
    </location>
</feature>
<feature type="compositionally biased region" description="Basic and acidic residues" evidence="2">
    <location>
        <begin position="306"/>
        <end position="326"/>
    </location>
</feature>
<feature type="modified residue" description="N5-methylglutamine" evidence="1">
    <location>
        <position position="239"/>
    </location>
</feature>
<comment type="function">
    <text evidence="1">Peptide chain release factor 1 directs the termination of translation in response to the peptide chain termination codons UAG and UAA.</text>
</comment>
<comment type="subcellular location">
    <subcellularLocation>
        <location evidence="1">Cytoplasm</location>
    </subcellularLocation>
</comment>
<comment type="PTM">
    <text evidence="1">Methylated by PrmC. Methylation increases the termination efficiency of RF1.</text>
</comment>
<comment type="similarity">
    <text evidence="1">Belongs to the prokaryotic/mitochondrial release factor family.</text>
</comment>
<gene>
    <name evidence="1" type="primary">prfA</name>
    <name type="ordered locus">SynRCC307_2145</name>
</gene>
<dbReference type="EMBL" id="CT978603">
    <property type="protein sequence ID" value="CAK29048.1"/>
    <property type="molecule type" value="Genomic_DNA"/>
</dbReference>
<dbReference type="SMR" id="A5GVY9"/>
<dbReference type="STRING" id="316278.SynRCC307_2145"/>
<dbReference type="KEGG" id="syr:SynRCC307_2145"/>
<dbReference type="eggNOG" id="COG0216">
    <property type="taxonomic scope" value="Bacteria"/>
</dbReference>
<dbReference type="HOGENOM" id="CLU_036856_0_1_3"/>
<dbReference type="OrthoDB" id="9806673at2"/>
<dbReference type="Proteomes" id="UP000001115">
    <property type="component" value="Chromosome"/>
</dbReference>
<dbReference type="GO" id="GO:0005737">
    <property type="term" value="C:cytoplasm"/>
    <property type="evidence" value="ECO:0007669"/>
    <property type="project" value="UniProtKB-SubCell"/>
</dbReference>
<dbReference type="GO" id="GO:0016149">
    <property type="term" value="F:translation release factor activity, codon specific"/>
    <property type="evidence" value="ECO:0007669"/>
    <property type="project" value="UniProtKB-UniRule"/>
</dbReference>
<dbReference type="FunFam" id="3.30.160.20:FF:000004">
    <property type="entry name" value="Peptide chain release factor 1"/>
    <property type="match status" value="1"/>
</dbReference>
<dbReference type="FunFam" id="3.30.70.1660:FF:000002">
    <property type="entry name" value="Peptide chain release factor 1"/>
    <property type="match status" value="1"/>
</dbReference>
<dbReference type="Gene3D" id="3.30.160.20">
    <property type="match status" value="1"/>
</dbReference>
<dbReference type="Gene3D" id="3.30.70.1660">
    <property type="match status" value="1"/>
</dbReference>
<dbReference type="Gene3D" id="6.10.140.1950">
    <property type="match status" value="1"/>
</dbReference>
<dbReference type="HAMAP" id="MF_00093">
    <property type="entry name" value="Rel_fac_1"/>
    <property type="match status" value="1"/>
</dbReference>
<dbReference type="InterPro" id="IPR005139">
    <property type="entry name" value="PCRF"/>
</dbReference>
<dbReference type="InterPro" id="IPR000352">
    <property type="entry name" value="Pep_chain_release_fac_I"/>
</dbReference>
<dbReference type="InterPro" id="IPR045853">
    <property type="entry name" value="Pep_chain_release_fac_I_sf"/>
</dbReference>
<dbReference type="InterPro" id="IPR050057">
    <property type="entry name" value="Prokaryotic/Mito_RF"/>
</dbReference>
<dbReference type="InterPro" id="IPR004373">
    <property type="entry name" value="RF-1"/>
</dbReference>
<dbReference type="NCBIfam" id="TIGR00019">
    <property type="entry name" value="prfA"/>
    <property type="match status" value="1"/>
</dbReference>
<dbReference type="NCBIfam" id="NF001859">
    <property type="entry name" value="PRK00591.1"/>
    <property type="match status" value="1"/>
</dbReference>
<dbReference type="PANTHER" id="PTHR43804">
    <property type="entry name" value="LD18447P"/>
    <property type="match status" value="1"/>
</dbReference>
<dbReference type="PANTHER" id="PTHR43804:SF8">
    <property type="entry name" value="PEPTIDE CHAIN RELEASE FACTOR APG3, CHLOROPLASTIC"/>
    <property type="match status" value="1"/>
</dbReference>
<dbReference type="Pfam" id="PF03462">
    <property type="entry name" value="PCRF"/>
    <property type="match status" value="1"/>
</dbReference>
<dbReference type="Pfam" id="PF00472">
    <property type="entry name" value="RF-1"/>
    <property type="match status" value="1"/>
</dbReference>
<dbReference type="SMART" id="SM00937">
    <property type="entry name" value="PCRF"/>
    <property type="match status" value="1"/>
</dbReference>
<dbReference type="SUPFAM" id="SSF75620">
    <property type="entry name" value="Release factor"/>
    <property type="match status" value="1"/>
</dbReference>
<dbReference type="PROSITE" id="PS00745">
    <property type="entry name" value="RF_PROK_I"/>
    <property type="match status" value="1"/>
</dbReference>
<evidence type="ECO:0000255" key="1">
    <source>
        <dbReference type="HAMAP-Rule" id="MF_00093"/>
    </source>
</evidence>
<evidence type="ECO:0000256" key="2">
    <source>
        <dbReference type="SAM" id="MobiDB-lite"/>
    </source>
</evidence>
<reference key="1">
    <citation type="submission" date="2006-05" db="EMBL/GenBank/DDBJ databases">
        <authorList>
            <consortium name="Genoscope"/>
        </authorList>
    </citation>
    <scope>NUCLEOTIDE SEQUENCE [LARGE SCALE GENOMIC DNA]</scope>
    <source>
        <strain>RCC307</strain>
    </source>
</reference>
<name>RF1_SYNR3</name>
<keyword id="KW-0963">Cytoplasm</keyword>
<keyword id="KW-0488">Methylation</keyword>
<keyword id="KW-0648">Protein biosynthesis</keyword>
<keyword id="KW-1185">Reference proteome</keyword>